<proteinExistence type="inferred from homology"/>
<keyword id="KW-0030">Aminoacyl-tRNA synthetase</keyword>
<keyword id="KW-0067">ATP-binding</keyword>
<keyword id="KW-0963">Cytoplasm</keyword>
<keyword id="KW-0436">Ligase</keyword>
<keyword id="KW-0547">Nucleotide-binding</keyword>
<keyword id="KW-0648">Protein biosynthesis</keyword>
<gene>
    <name evidence="1" type="primary">lysS</name>
    <name type="ordered locus">A1C_02755</name>
</gene>
<accession>A8GN71</accession>
<comment type="catalytic activity">
    <reaction evidence="1">
        <text>tRNA(Lys) + L-lysine + ATP = L-lysyl-tRNA(Lys) + AMP + diphosphate</text>
        <dbReference type="Rhea" id="RHEA:20792"/>
        <dbReference type="Rhea" id="RHEA-COMP:9696"/>
        <dbReference type="Rhea" id="RHEA-COMP:9697"/>
        <dbReference type="ChEBI" id="CHEBI:30616"/>
        <dbReference type="ChEBI" id="CHEBI:32551"/>
        <dbReference type="ChEBI" id="CHEBI:33019"/>
        <dbReference type="ChEBI" id="CHEBI:78442"/>
        <dbReference type="ChEBI" id="CHEBI:78529"/>
        <dbReference type="ChEBI" id="CHEBI:456215"/>
        <dbReference type="EC" id="6.1.1.6"/>
    </reaction>
</comment>
<comment type="subcellular location">
    <subcellularLocation>
        <location evidence="1">Cytoplasm</location>
    </subcellularLocation>
</comment>
<comment type="similarity">
    <text evidence="1">Belongs to the class-I aminoacyl-tRNA synthetase family.</text>
</comment>
<dbReference type="EC" id="6.1.1.6" evidence="1"/>
<dbReference type="EMBL" id="CP000847">
    <property type="protein sequence ID" value="ABV74846.1"/>
    <property type="molecule type" value="Genomic_DNA"/>
</dbReference>
<dbReference type="RefSeq" id="WP_012149480.1">
    <property type="nucleotide sequence ID" value="NC_009881.1"/>
</dbReference>
<dbReference type="SMR" id="A8GN71"/>
<dbReference type="STRING" id="293614.A1C_02755"/>
<dbReference type="KEGG" id="rak:A1C_02755"/>
<dbReference type="eggNOG" id="COG1384">
    <property type="taxonomic scope" value="Bacteria"/>
</dbReference>
<dbReference type="HOGENOM" id="CLU_025562_2_0_5"/>
<dbReference type="Proteomes" id="UP000006830">
    <property type="component" value="Chromosome"/>
</dbReference>
<dbReference type="GO" id="GO:0005737">
    <property type="term" value="C:cytoplasm"/>
    <property type="evidence" value="ECO:0007669"/>
    <property type="project" value="UniProtKB-SubCell"/>
</dbReference>
<dbReference type="GO" id="GO:0005524">
    <property type="term" value="F:ATP binding"/>
    <property type="evidence" value="ECO:0007669"/>
    <property type="project" value="UniProtKB-UniRule"/>
</dbReference>
<dbReference type="GO" id="GO:0004824">
    <property type="term" value="F:lysine-tRNA ligase activity"/>
    <property type="evidence" value="ECO:0007669"/>
    <property type="project" value="UniProtKB-UniRule"/>
</dbReference>
<dbReference type="GO" id="GO:0000049">
    <property type="term" value="F:tRNA binding"/>
    <property type="evidence" value="ECO:0007669"/>
    <property type="project" value="InterPro"/>
</dbReference>
<dbReference type="GO" id="GO:0006430">
    <property type="term" value="P:lysyl-tRNA aminoacylation"/>
    <property type="evidence" value="ECO:0007669"/>
    <property type="project" value="UniProtKB-UniRule"/>
</dbReference>
<dbReference type="Gene3D" id="1.10.10.350">
    <property type="match status" value="1"/>
</dbReference>
<dbReference type="Gene3D" id="3.40.50.620">
    <property type="entry name" value="HUPs"/>
    <property type="match status" value="2"/>
</dbReference>
<dbReference type="HAMAP" id="MF_00177">
    <property type="entry name" value="Lys_tRNA_synth_class1"/>
    <property type="match status" value="1"/>
</dbReference>
<dbReference type="InterPro" id="IPR020751">
    <property type="entry name" value="aa-tRNA-synth_I_codon-bd_sub2"/>
</dbReference>
<dbReference type="InterPro" id="IPR001412">
    <property type="entry name" value="aa-tRNA-synth_I_CS"/>
</dbReference>
<dbReference type="InterPro" id="IPR008925">
    <property type="entry name" value="aa_tRNA-synth_I_cd-bd_sf"/>
</dbReference>
<dbReference type="InterPro" id="IPR002904">
    <property type="entry name" value="Lys-tRNA-ligase"/>
</dbReference>
<dbReference type="InterPro" id="IPR014729">
    <property type="entry name" value="Rossmann-like_a/b/a_fold"/>
</dbReference>
<dbReference type="NCBIfam" id="TIGR00467">
    <property type="entry name" value="lysS_arch"/>
    <property type="match status" value="1"/>
</dbReference>
<dbReference type="NCBIfam" id="NF001968">
    <property type="entry name" value="PRK00750.1-2"/>
    <property type="match status" value="1"/>
</dbReference>
<dbReference type="PANTHER" id="PTHR37940">
    <property type="entry name" value="LYSINE--TRNA LIGASE"/>
    <property type="match status" value="1"/>
</dbReference>
<dbReference type="PANTHER" id="PTHR37940:SF1">
    <property type="entry name" value="LYSINE--TRNA LIGASE"/>
    <property type="match status" value="1"/>
</dbReference>
<dbReference type="Pfam" id="PF01921">
    <property type="entry name" value="tRNA-synt_1f"/>
    <property type="match status" value="1"/>
</dbReference>
<dbReference type="SUPFAM" id="SSF48163">
    <property type="entry name" value="An anticodon-binding domain of class I aminoacyl-tRNA synthetases"/>
    <property type="match status" value="1"/>
</dbReference>
<dbReference type="SUPFAM" id="SSF52374">
    <property type="entry name" value="Nucleotidylyl transferase"/>
    <property type="match status" value="1"/>
</dbReference>
<dbReference type="PROSITE" id="PS00178">
    <property type="entry name" value="AA_TRNA_LIGASE_I"/>
    <property type="match status" value="1"/>
</dbReference>
<reference key="1">
    <citation type="submission" date="2007-09" db="EMBL/GenBank/DDBJ databases">
        <title>Complete genome sequence of Rickettsia akari.</title>
        <authorList>
            <person name="Madan A."/>
            <person name="Fahey J."/>
            <person name="Helton E."/>
            <person name="Ketteman M."/>
            <person name="Madan A."/>
            <person name="Rodrigues S."/>
            <person name="Sanchez A."/>
            <person name="Whiting M."/>
            <person name="Dasch G."/>
            <person name="Eremeeva M."/>
        </authorList>
    </citation>
    <scope>NUCLEOTIDE SEQUENCE [LARGE SCALE GENOMIC DNA]</scope>
    <source>
        <strain>Hartford</strain>
    </source>
</reference>
<feature type="chain" id="PRO_1000040350" description="Lysine--tRNA ligase">
    <location>
        <begin position="1"/>
        <end position="529"/>
    </location>
</feature>
<feature type="short sequence motif" description="'HIGH' region">
    <location>
        <begin position="44"/>
        <end position="52"/>
    </location>
</feature>
<feature type="short sequence motif" description="'KMSKS' region">
    <location>
        <begin position="290"/>
        <end position="294"/>
    </location>
</feature>
<feature type="binding site" evidence="1">
    <location>
        <position position="293"/>
    </location>
    <ligand>
        <name>ATP</name>
        <dbReference type="ChEBI" id="CHEBI:30616"/>
    </ligand>
</feature>
<evidence type="ECO:0000255" key="1">
    <source>
        <dbReference type="HAMAP-Rule" id="MF_00177"/>
    </source>
</evidence>
<name>SYK_RICAH</name>
<organism>
    <name type="scientific">Rickettsia akari (strain Hartford)</name>
    <dbReference type="NCBI Taxonomy" id="293614"/>
    <lineage>
        <taxon>Bacteria</taxon>
        <taxon>Pseudomonadati</taxon>
        <taxon>Pseudomonadota</taxon>
        <taxon>Alphaproteobacteria</taxon>
        <taxon>Rickettsiales</taxon>
        <taxon>Rickettsiaceae</taxon>
        <taxon>Rickettsieae</taxon>
        <taxon>Rickettsia</taxon>
        <taxon>spotted fever group</taxon>
    </lineage>
</organism>
<sequence>MSEIWEDAIKSNAWPFVEAKKILDSLNGKTPEKGYLLFETGYGPSGLPHIGTFGENARIVMVQKAFEQLSDIPTKLICFSDDMDGLRKVPSNIPHPEMVAGYMDMPLTSIPDPFGECESYGHYMNAKLRSFLDKFGFKYEFYSSTNCYKAGMFDEMLIRVLEQYDKIMELMLPTFREERKATYSPFMPVCLKTGKVLQVPIEKWDAKVGTVTYKDEAGNYIEVPVTGGHCKLQWKPDFGMRWAALKVDYEMYGKDHLANARLYSEICRILGGKPPVQLCYELFLDENGEKISKSKGNSISVDDWLKYAPVESMALFMYQNPTRAKRLFFDVIPKNVDEYITFNQKYHLEEDRAKRFANPVYHIHHGNVPKIETFGITYVLLLNLTSVCNPSDKTVLWGFISKYEPKATPNTSPYLDHLAEFAIRYYNDFIKAHKSYLAPSEKHNVILRDILDMLSDISDQTEAEGIQKAIYDIGMRAGYENLRDYFKDLYQILLGQSEGPRLGTFIKLYGVQETKKLVAGKLTMLSRKK</sequence>
<protein>
    <recommendedName>
        <fullName evidence="1">Lysine--tRNA ligase</fullName>
        <ecNumber evidence="1">6.1.1.6</ecNumber>
    </recommendedName>
    <alternativeName>
        <fullName evidence="1">Lysyl-tRNA synthetase</fullName>
        <shortName evidence="1">LysRS</shortName>
    </alternativeName>
</protein>